<reference key="1">
    <citation type="journal article" date="2008" name="DNA Res.">
        <title>Complete genome sequence and comparative analysis of the wild-type commensal Escherichia coli strain SE11 isolated from a healthy adult.</title>
        <authorList>
            <person name="Oshima K."/>
            <person name="Toh H."/>
            <person name="Ogura Y."/>
            <person name="Sasamoto H."/>
            <person name="Morita H."/>
            <person name="Park S.-H."/>
            <person name="Ooka T."/>
            <person name="Iyoda S."/>
            <person name="Taylor T.D."/>
            <person name="Hayashi T."/>
            <person name="Itoh K."/>
            <person name="Hattori M."/>
        </authorList>
    </citation>
    <scope>NUCLEOTIDE SEQUENCE [LARGE SCALE GENOMIC DNA]</scope>
    <source>
        <strain>SE11</strain>
    </source>
</reference>
<evidence type="ECO:0000255" key="1">
    <source>
        <dbReference type="HAMAP-Rule" id="MF_01341"/>
    </source>
</evidence>
<evidence type="ECO:0000256" key="2">
    <source>
        <dbReference type="SAM" id="MobiDB-lite"/>
    </source>
</evidence>
<evidence type="ECO:0000305" key="3"/>
<organism>
    <name type="scientific">Escherichia coli (strain SE11)</name>
    <dbReference type="NCBI Taxonomy" id="409438"/>
    <lineage>
        <taxon>Bacteria</taxon>
        <taxon>Pseudomonadati</taxon>
        <taxon>Pseudomonadota</taxon>
        <taxon>Gammaproteobacteria</taxon>
        <taxon>Enterobacterales</taxon>
        <taxon>Enterobacteriaceae</taxon>
        <taxon>Escherichia</taxon>
    </lineage>
</organism>
<accession>B6I215</accession>
<keyword id="KW-0687">Ribonucleoprotein</keyword>
<keyword id="KW-0689">Ribosomal protein</keyword>
<keyword id="KW-0694">RNA-binding</keyword>
<keyword id="KW-0699">rRNA-binding</keyword>
<dbReference type="EMBL" id="AP009240">
    <property type="protein sequence ID" value="BAG79100.1"/>
    <property type="molecule type" value="Genomic_DNA"/>
</dbReference>
<dbReference type="RefSeq" id="WP_001238917.1">
    <property type="nucleotide sequence ID" value="NC_011415.1"/>
</dbReference>
<dbReference type="SMR" id="B6I215"/>
<dbReference type="GeneID" id="93778686"/>
<dbReference type="KEGG" id="ecy:ECSE_3576"/>
<dbReference type="HOGENOM" id="CLU_055188_4_2_6"/>
<dbReference type="Proteomes" id="UP000008199">
    <property type="component" value="Chromosome"/>
</dbReference>
<dbReference type="GO" id="GO:0022625">
    <property type="term" value="C:cytosolic large ribosomal subunit"/>
    <property type="evidence" value="ECO:0007669"/>
    <property type="project" value="TreeGrafter"/>
</dbReference>
<dbReference type="GO" id="GO:0019843">
    <property type="term" value="F:rRNA binding"/>
    <property type="evidence" value="ECO:0007669"/>
    <property type="project" value="UniProtKB-UniRule"/>
</dbReference>
<dbReference type="GO" id="GO:0003735">
    <property type="term" value="F:structural constituent of ribosome"/>
    <property type="evidence" value="ECO:0007669"/>
    <property type="project" value="InterPro"/>
</dbReference>
<dbReference type="GO" id="GO:0006412">
    <property type="term" value="P:translation"/>
    <property type="evidence" value="ECO:0007669"/>
    <property type="project" value="UniProtKB-UniRule"/>
</dbReference>
<dbReference type="FunFam" id="3.100.10.10:FF:000003">
    <property type="entry name" value="50S ribosomal protein L15"/>
    <property type="match status" value="1"/>
</dbReference>
<dbReference type="Gene3D" id="3.100.10.10">
    <property type="match status" value="1"/>
</dbReference>
<dbReference type="HAMAP" id="MF_01341">
    <property type="entry name" value="Ribosomal_uL15"/>
    <property type="match status" value="1"/>
</dbReference>
<dbReference type="InterPro" id="IPR030878">
    <property type="entry name" value="Ribosomal_uL15"/>
</dbReference>
<dbReference type="InterPro" id="IPR021131">
    <property type="entry name" value="Ribosomal_uL15/eL18"/>
</dbReference>
<dbReference type="InterPro" id="IPR036227">
    <property type="entry name" value="Ribosomal_uL15/eL18_sf"/>
</dbReference>
<dbReference type="InterPro" id="IPR005749">
    <property type="entry name" value="Ribosomal_uL15_bac-type"/>
</dbReference>
<dbReference type="InterPro" id="IPR001196">
    <property type="entry name" value="Ribosomal_uL15_CS"/>
</dbReference>
<dbReference type="NCBIfam" id="TIGR01071">
    <property type="entry name" value="rplO_bact"/>
    <property type="match status" value="1"/>
</dbReference>
<dbReference type="PANTHER" id="PTHR12934">
    <property type="entry name" value="50S RIBOSOMAL PROTEIN L15"/>
    <property type="match status" value="1"/>
</dbReference>
<dbReference type="PANTHER" id="PTHR12934:SF11">
    <property type="entry name" value="LARGE RIBOSOMAL SUBUNIT PROTEIN UL15M"/>
    <property type="match status" value="1"/>
</dbReference>
<dbReference type="Pfam" id="PF00828">
    <property type="entry name" value="Ribosomal_L27A"/>
    <property type="match status" value="1"/>
</dbReference>
<dbReference type="SUPFAM" id="SSF52080">
    <property type="entry name" value="Ribosomal proteins L15p and L18e"/>
    <property type="match status" value="1"/>
</dbReference>
<dbReference type="PROSITE" id="PS00475">
    <property type="entry name" value="RIBOSOMAL_L15"/>
    <property type="match status" value="1"/>
</dbReference>
<protein>
    <recommendedName>
        <fullName evidence="1">Large ribosomal subunit protein uL15</fullName>
    </recommendedName>
    <alternativeName>
        <fullName evidence="3">50S ribosomal protein L15</fullName>
    </alternativeName>
</protein>
<gene>
    <name evidence="1" type="primary">rplO</name>
    <name type="ordered locus">ECSE_3576</name>
</gene>
<name>RL15_ECOSE</name>
<proteinExistence type="inferred from homology"/>
<comment type="function">
    <text evidence="1">Binds to the 23S rRNA.</text>
</comment>
<comment type="subunit">
    <text evidence="1">Part of the 50S ribosomal subunit.</text>
</comment>
<comment type="similarity">
    <text evidence="1">Belongs to the universal ribosomal protein uL15 family.</text>
</comment>
<sequence>MRLNTLSPAEGSKKAGKRLGRGIGSGLGKTGGRGHKGQKSRSGGGVRRGFEGGQMPLYRRLPKFGFTSRKAAITAEVRLSDLAKVEGGVVDLNTLKAANIIGIQIEFAKVILAGEVTTPVTVRGLRVTKGARAAIEAAGGKIEE</sequence>
<feature type="chain" id="PRO_1000142816" description="Large ribosomal subunit protein uL15">
    <location>
        <begin position="1"/>
        <end position="144"/>
    </location>
</feature>
<feature type="region of interest" description="Disordered" evidence="2">
    <location>
        <begin position="1"/>
        <end position="54"/>
    </location>
</feature>
<feature type="compositionally biased region" description="Gly residues" evidence="2">
    <location>
        <begin position="21"/>
        <end position="31"/>
    </location>
</feature>